<gene>
    <name evidence="1" type="primary">ubiE</name>
    <name type="ordered locus">Bamb_2783</name>
</gene>
<evidence type="ECO:0000255" key="1">
    <source>
        <dbReference type="HAMAP-Rule" id="MF_01813"/>
    </source>
</evidence>
<proteinExistence type="inferred from homology"/>
<feature type="chain" id="PRO_1000056227" description="Ubiquinone/menaquinone biosynthesis C-methyltransferase UbiE">
    <location>
        <begin position="1"/>
        <end position="243"/>
    </location>
</feature>
<feature type="binding site" evidence="1">
    <location>
        <position position="69"/>
    </location>
    <ligand>
        <name>S-adenosyl-L-methionine</name>
        <dbReference type="ChEBI" id="CHEBI:59789"/>
    </ligand>
</feature>
<feature type="binding site" evidence="1">
    <location>
        <position position="90"/>
    </location>
    <ligand>
        <name>S-adenosyl-L-methionine</name>
        <dbReference type="ChEBI" id="CHEBI:59789"/>
    </ligand>
</feature>
<feature type="binding site" evidence="1">
    <location>
        <begin position="116"/>
        <end position="117"/>
    </location>
    <ligand>
        <name>S-adenosyl-L-methionine</name>
        <dbReference type="ChEBI" id="CHEBI:59789"/>
    </ligand>
</feature>
<comment type="function">
    <text evidence="1">Methyltransferase required for the conversion of demethylmenaquinol (DMKH2) to menaquinol (MKH2) and the conversion of 2-polyprenyl-6-methoxy-1,4-benzoquinol (DDMQH2) to 2-polyprenyl-3-methyl-6-methoxy-1,4-benzoquinol (DMQH2).</text>
</comment>
<comment type="catalytic activity">
    <reaction evidence="1">
        <text>a 2-demethylmenaquinol + S-adenosyl-L-methionine = a menaquinol + S-adenosyl-L-homocysteine + H(+)</text>
        <dbReference type="Rhea" id="RHEA:42640"/>
        <dbReference type="Rhea" id="RHEA-COMP:9539"/>
        <dbReference type="Rhea" id="RHEA-COMP:9563"/>
        <dbReference type="ChEBI" id="CHEBI:15378"/>
        <dbReference type="ChEBI" id="CHEBI:18151"/>
        <dbReference type="ChEBI" id="CHEBI:55437"/>
        <dbReference type="ChEBI" id="CHEBI:57856"/>
        <dbReference type="ChEBI" id="CHEBI:59789"/>
        <dbReference type="EC" id="2.1.1.163"/>
    </reaction>
</comment>
<comment type="catalytic activity">
    <reaction evidence="1">
        <text>a 2-methoxy-6-(all-trans-polyprenyl)benzene-1,4-diol + S-adenosyl-L-methionine = a 5-methoxy-2-methyl-3-(all-trans-polyprenyl)benzene-1,4-diol + S-adenosyl-L-homocysteine + H(+)</text>
        <dbReference type="Rhea" id="RHEA:28286"/>
        <dbReference type="Rhea" id="RHEA-COMP:10858"/>
        <dbReference type="Rhea" id="RHEA-COMP:10859"/>
        <dbReference type="ChEBI" id="CHEBI:15378"/>
        <dbReference type="ChEBI" id="CHEBI:57856"/>
        <dbReference type="ChEBI" id="CHEBI:59789"/>
        <dbReference type="ChEBI" id="CHEBI:84166"/>
        <dbReference type="ChEBI" id="CHEBI:84167"/>
        <dbReference type="EC" id="2.1.1.201"/>
    </reaction>
</comment>
<comment type="pathway">
    <text evidence="1">Quinol/quinone metabolism; menaquinone biosynthesis; menaquinol from 1,4-dihydroxy-2-naphthoate: step 2/2.</text>
</comment>
<comment type="pathway">
    <text evidence="1">Cofactor biosynthesis; ubiquinone biosynthesis.</text>
</comment>
<comment type="similarity">
    <text evidence="1">Belongs to the class I-like SAM-binding methyltransferase superfamily. MenG/UbiE family.</text>
</comment>
<protein>
    <recommendedName>
        <fullName evidence="1">Ubiquinone/menaquinone biosynthesis C-methyltransferase UbiE</fullName>
        <ecNumber evidence="1">2.1.1.163</ecNumber>
        <ecNumber evidence="1">2.1.1.201</ecNumber>
    </recommendedName>
    <alternativeName>
        <fullName evidence="1">2-methoxy-6-polyprenyl-1,4-benzoquinol methylase</fullName>
    </alternativeName>
    <alternativeName>
        <fullName evidence="1">Demethylmenaquinone methyltransferase</fullName>
    </alternativeName>
</protein>
<reference key="1">
    <citation type="submission" date="2006-08" db="EMBL/GenBank/DDBJ databases">
        <title>Complete sequence of chromosome 1 of Burkholderia cepacia AMMD.</title>
        <authorList>
            <person name="Copeland A."/>
            <person name="Lucas S."/>
            <person name="Lapidus A."/>
            <person name="Barry K."/>
            <person name="Detter J.C."/>
            <person name="Glavina del Rio T."/>
            <person name="Hammon N."/>
            <person name="Israni S."/>
            <person name="Pitluck S."/>
            <person name="Bruce D."/>
            <person name="Chain P."/>
            <person name="Malfatti S."/>
            <person name="Shin M."/>
            <person name="Vergez L."/>
            <person name="Schmutz J."/>
            <person name="Larimer F."/>
            <person name="Land M."/>
            <person name="Hauser L."/>
            <person name="Kyrpides N."/>
            <person name="Kim E."/>
            <person name="Parke J."/>
            <person name="Coenye T."/>
            <person name="Konstantinidis K."/>
            <person name="Ramette A."/>
            <person name="Tiedje J."/>
            <person name="Richardson P."/>
        </authorList>
    </citation>
    <scope>NUCLEOTIDE SEQUENCE [LARGE SCALE GENOMIC DNA]</scope>
    <source>
        <strain>ATCC BAA-244 / DSM 16087 / CCUG 44356 / LMG 19182 / AMMD</strain>
    </source>
</reference>
<accession>Q0BBY4</accession>
<organism>
    <name type="scientific">Burkholderia ambifaria (strain ATCC BAA-244 / DSM 16087 / CCUG 44356 / LMG 19182 / AMMD)</name>
    <name type="common">Burkholderia cepacia (strain AMMD)</name>
    <dbReference type="NCBI Taxonomy" id="339670"/>
    <lineage>
        <taxon>Bacteria</taxon>
        <taxon>Pseudomonadati</taxon>
        <taxon>Pseudomonadota</taxon>
        <taxon>Betaproteobacteria</taxon>
        <taxon>Burkholderiales</taxon>
        <taxon>Burkholderiaceae</taxon>
        <taxon>Burkholderia</taxon>
        <taxon>Burkholderia cepacia complex</taxon>
    </lineage>
</organism>
<sequence>MSKTHFGFESVEETEKAKKVAGVFHSVASNYDLMNDLMSAGMHRAWKAFTIAQANVRPGFKVLDIAAGTGDLTKSFAKAAGPTGEVWHTDINESMLRVGRDRLLDKGIVTPSLLCDAEKIPFPDNYFDVVTVAFGLRNMTHKDAALAEMRRVTKPGGRVMVLEFSKVWDPLKKAYDLYSFKVLPWLGDKFAKDAESYRYLAESIRMHPDQDTLKTMMEQAGLDAVKYYNLSGGVVALHLGTKY</sequence>
<dbReference type="EC" id="2.1.1.163" evidence="1"/>
<dbReference type="EC" id="2.1.1.201" evidence="1"/>
<dbReference type="EMBL" id="CP000440">
    <property type="protein sequence ID" value="ABI88339.1"/>
    <property type="molecule type" value="Genomic_DNA"/>
</dbReference>
<dbReference type="RefSeq" id="WP_011657902.1">
    <property type="nucleotide sequence ID" value="NZ_CP009798.1"/>
</dbReference>
<dbReference type="SMR" id="Q0BBY4"/>
<dbReference type="GeneID" id="93085016"/>
<dbReference type="KEGG" id="bam:Bamb_2783"/>
<dbReference type="PATRIC" id="fig|339670.21.peg.2108"/>
<dbReference type="eggNOG" id="COG2226">
    <property type="taxonomic scope" value="Bacteria"/>
</dbReference>
<dbReference type="UniPathway" id="UPA00079">
    <property type="reaction ID" value="UER00169"/>
</dbReference>
<dbReference type="UniPathway" id="UPA00232"/>
<dbReference type="Proteomes" id="UP000000662">
    <property type="component" value="Chromosome 1"/>
</dbReference>
<dbReference type="GO" id="GO:0008425">
    <property type="term" value="F:2-methoxy-6-polyprenyl-1,4-benzoquinol methyltransferase activity"/>
    <property type="evidence" value="ECO:0007669"/>
    <property type="project" value="UniProtKB-UniRule"/>
</dbReference>
<dbReference type="GO" id="GO:0043770">
    <property type="term" value="F:demethylmenaquinone methyltransferase activity"/>
    <property type="evidence" value="ECO:0007669"/>
    <property type="project" value="UniProtKB-UniRule"/>
</dbReference>
<dbReference type="GO" id="GO:0009060">
    <property type="term" value="P:aerobic respiration"/>
    <property type="evidence" value="ECO:0007669"/>
    <property type="project" value="UniProtKB-UniRule"/>
</dbReference>
<dbReference type="GO" id="GO:0009234">
    <property type="term" value="P:menaquinone biosynthetic process"/>
    <property type="evidence" value="ECO:0007669"/>
    <property type="project" value="UniProtKB-UniRule"/>
</dbReference>
<dbReference type="GO" id="GO:0032259">
    <property type="term" value="P:methylation"/>
    <property type="evidence" value="ECO:0007669"/>
    <property type="project" value="UniProtKB-KW"/>
</dbReference>
<dbReference type="CDD" id="cd02440">
    <property type="entry name" value="AdoMet_MTases"/>
    <property type="match status" value="1"/>
</dbReference>
<dbReference type="Gene3D" id="3.40.50.150">
    <property type="entry name" value="Vaccinia Virus protein VP39"/>
    <property type="match status" value="1"/>
</dbReference>
<dbReference type="HAMAP" id="MF_01813">
    <property type="entry name" value="MenG_UbiE_methyltr"/>
    <property type="match status" value="1"/>
</dbReference>
<dbReference type="InterPro" id="IPR029063">
    <property type="entry name" value="SAM-dependent_MTases_sf"/>
</dbReference>
<dbReference type="InterPro" id="IPR004033">
    <property type="entry name" value="UbiE/COQ5_MeTrFase"/>
</dbReference>
<dbReference type="InterPro" id="IPR023576">
    <property type="entry name" value="UbiE/COQ5_MeTrFase_CS"/>
</dbReference>
<dbReference type="NCBIfam" id="TIGR01934">
    <property type="entry name" value="MenG_MenH_UbiE"/>
    <property type="match status" value="1"/>
</dbReference>
<dbReference type="NCBIfam" id="NF001240">
    <property type="entry name" value="PRK00216.1-1"/>
    <property type="match status" value="1"/>
</dbReference>
<dbReference type="PANTHER" id="PTHR43591:SF24">
    <property type="entry name" value="2-METHOXY-6-POLYPRENYL-1,4-BENZOQUINOL METHYLASE, MITOCHONDRIAL"/>
    <property type="match status" value="1"/>
</dbReference>
<dbReference type="PANTHER" id="PTHR43591">
    <property type="entry name" value="METHYLTRANSFERASE"/>
    <property type="match status" value="1"/>
</dbReference>
<dbReference type="Pfam" id="PF01209">
    <property type="entry name" value="Ubie_methyltran"/>
    <property type="match status" value="1"/>
</dbReference>
<dbReference type="SUPFAM" id="SSF53335">
    <property type="entry name" value="S-adenosyl-L-methionine-dependent methyltransferases"/>
    <property type="match status" value="1"/>
</dbReference>
<dbReference type="PROSITE" id="PS51608">
    <property type="entry name" value="SAM_MT_UBIE"/>
    <property type="match status" value="1"/>
</dbReference>
<dbReference type="PROSITE" id="PS01183">
    <property type="entry name" value="UBIE_1"/>
    <property type="match status" value="1"/>
</dbReference>
<dbReference type="PROSITE" id="PS01184">
    <property type="entry name" value="UBIE_2"/>
    <property type="match status" value="1"/>
</dbReference>
<keyword id="KW-0474">Menaquinone biosynthesis</keyword>
<keyword id="KW-0489">Methyltransferase</keyword>
<keyword id="KW-0949">S-adenosyl-L-methionine</keyword>
<keyword id="KW-0808">Transferase</keyword>
<keyword id="KW-0831">Ubiquinone biosynthesis</keyword>
<name>UBIE_BURCM</name>